<name>FLHB_TREPA</name>
<keyword id="KW-1005">Bacterial flagellum biogenesis</keyword>
<keyword id="KW-1006">Bacterial flagellum protein export</keyword>
<keyword id="KW-0997">Cell inner membrane</keyword>
<keyword id="KW-1003">Cell membrane</keyword>
<keyword id="KW-0472">Membrane</keyword>
<keyword id="KW-0653">Protein transport</keyword>
<keyword id="KW-1185">Reference proteome</keyword>
<keyword id="KW-0812">Transmembrane</keyword>
<keyword id="KW-1133">Transmembrane helix</keyword>
<keyword id="KW-0813">Transport</keyword>
<dbReference type="EMBL" id="U36839">
    <property type="protein sequence ID" value="AAB00549.1"/>
    <property type="molecule type" value="Genomic_DNA"/>
</dbReference>
<dbReference type="EMBL" id="AE000520">
    <property type="protein sequence ID" value="AAC65681.1"/>
    <property type="molecule type" value="Genomic_DNA"/>
</dbReference>
<dbReference type="PIR" id="G71290">
    <property type="entry name" value="G71290"/>
</dbReference>
<dbReference type="RefSeq" id="WP_010882160.1">
    <property type="nucleotide sequence ID" value="NC_021490.2"/>
</dbReference>
<dbReference type="SMR" id="O83710"/>
<dbReference type="IntAct" id="O83710">
    <property type="interactions" value="2"/>
</dbReference>
<dbReference type="STRING" id="243276.TP_0715"/>
<dbReference type="EnsemblBacteria" id="AAC65681">
    <property type="protein sequence ID" value="AAC65681"/>
    <property type="gene ID" value="TP_0715"/>
</dbReference>
<dbReference type="GeneID" id="93876484"/>
<dbReference type="KEGG" id="tpa:TP_0715"/>
<dbReference type="KEGG" id="tpw:TPANIC_0715"/>
<dbReference type="eggNOG" id="COG1377">
    <property type="taxonomic scope" value="Bacteria"/>
</dbReference>
<dbReference type="HOGENOM" id="CLU_041013_1_2_12"/>
<dbReference type="OrthoDB" id="9807950at2"/>
<dbReference type="Proteomes" id="UP000000811">
    <property type="component" value="Chromosome"/>
</dbReference>
<dbReference type="GO" id="GO:0005886">
    <property type="term" value="C:plasma membrane"/>
    <property type="evidence" value="ECO:0007669"/>
    <property type="project" value="UniProtKB-SubCell"/>
</dbReference>
<dbReference type="GO" id="GO:0044780">
    <property type="term" value="P:bacterial-type flagellum assembly"/>
    <property type="evidence" value="ECO:0007669"/>
    <property type="project" value="InterPro"/>
</dbReference>
<dbReference type="GO" id="GO:0009306">
    <property type="term" value="P:protein secretion"/>
    <property type="evidence" value="ECO:0007669"/>
    <property type="project" value="InterPro"/>
</dbReference>
<dbReference type="Gene3D" id="3.40.1690.10">
    <property type="entry name" value="secretion proteins EscU"/>
    <property type="match status" value="1"/>
</dbReference>
<dbReference type="InterPro" id="IPR006136">
    <property type="entry name" value="FlhB"/>
</dbReference>
<dbReference type="InterPro" id="IPR006135">
    <property type="entry name" value="T3SS_substrate_exporter"/>
</dbReference>
<dbReference type="InterPro" id="IPR029025">
    <property type="entry name" value="T3SS_substrate_exporter_C"/>
</dbReference>
<dbReference type="NCBIfam" id="TIGR00328">
    <property type="entry name" value="flhB"/>
    <property type="match status" value="1"/>
</dbReference>
<dbReference type="PANTHER" id="PTHR30531">
    <property type="entry name" value="FLAGELLAR BIOSYNTHETIC PROTEIN FLHB"/>
    <property type="match status" value="1"/>
</dbReference>
<dbReference type="PANTHER" id="PTHR30531:SF12">
    <property type="entry name" value="FLAGELLAR BIOSYNTHETIC PROTEIN FLHB"/>
    <property type="match status" value="1"/>
</dbReference>
<dbReference type="Pfam" id="PF01312">
    <property type="entry name" value="Bac_export_2"/>
    <property type="match status" value="1"/>
</dbReference>
<dbReference type="PRINTS" id="PR00950">
    <property type="entry name" value="TYPE3IMSPROT"/>
</dbReference>
<dbReference type="SUPFAM" id="SSF160544">
    <property type="entry name" value="EscU C-terminal domain-like"/>
    <property type="match status" value="1"/>
</dbReference>
<sequence length="376" mass="43039">MIEQEGTFPLPLFIIDLQWFAAEDEGRSEDPTETKLRKAREEGRVPKSQDLNGAFVMLFTSTSLFLLAPFILRECIGVLRFFFTRATTASIQNTGWFFVFVRYFMKLALPISFVALVSGVAANIVQNKTVLFSVKSIRPQFKKISPDVIRFFKRSFFSTEGLFNLLKSLIKITAIFFVSYFTIRNDLFMFVSLLGVSLTQSIFYITSLAGKVLLEVSLLLVVFSLPDYFFQRRQFIDSLKMSRQEVKEELKEQEGDPLVRSYVRKQMQSLVRESARNTTDADVVITNPTHFAVAVQYEPAYMTAPTVVAKGSDGTAYRIKRLAKEAGILIEENKPLARALYTQVAIGREVPYEYFNALVLIFTKLDKFKTHAQRKR</sequence>
<accession>O83710</accession>
<accession>Q56337</accession>
<feature type="chain" id="PRO_0000180954" description="Flagellar biosynthetic protein FlhB">
    <location>
        <begin position="1"/>
        <end position="376"/>
    </location>
</feature>
<feature type="transmembrane region" description="Helical" evidence="2">
    <location>
        <begin position="51"/>
        <end position="71"/>
    </location>
</feature>
<feature type="transmembrane region" description="Helical" evidence="2">
    <location>
        <begin position="97"/>
        <end position="117"/>
    </location>
</feature>
<feature type="transmembrane region" description="Helical" evidence="2">
    <location>
        <begin position="161"/>
        <end position="181"/>
    </location>
</feature>
<feature type="transmembrane region" description="Helical" evidence="2">
    <location>
        <begin position="202"/>
        <end position="222"/>
    </location>
</feature>
<feature type="sequence conflict" description="In Ref. 1; AAB00549." evidence="3" ref="1">
    <original>ALVLIFTKLDKFKTHAQRKR</original>
    <variation>CFSADFYQAG</variation>
    <location>
        <begin position="357"/>
        <end position="376"/>
    </location>
</feature>
<organism>
    <name type="scientific">Treponema pallidum (strain Nichols)</name>
    <dbReference type="NCBI Taxonomy" id="243276"/>
    <lineage>
        <taxon>Bacteria</taxon>
        <taxon>Pseudomonadati</taxon>
        <taxon>Spirochaetota</taxon>
        <taxon>Spirochaetia</taxon>
        <taxon>Spirochaetales</taxon>
        <taxon>Treponemataceae</taxon>
        <taxon>Treponema</taxon>
    </lineage>
</organism>
<gene>
    <name type="primary">flhB</name>
    <name type="ordered locus">TP_0715</name>
</gene>
<protein>
    <recommendedName>
        <fullName>Flagellar biosynthetic protein FlhB</fullName>
    </recommendedName>
</protein>
<evidence type="ECO:0000250" key="1"/>
<evidence type="ECO:0000255" key="2"/>
<evidence type="ECO:0000305" key="3"/>
<proteinExistence type="inferred from homology"/>
<comment type="function">
    <text evidence="1">Required for formation of the rod structure in the basal body of the flagellar apparatus. Together with FliI and FliH, may constitute the export apparatus of flagellin (By similarity).</text>
</comment>
<comment type="subcellular location">
    <subcellularLocation>
        <location evidence="3">Cell inner membrane</location>
        <topology evidence="3">Multi-pass membrane protein</topology>
    </subcellularLocation>
</comment>
<comment type="similarity">
    <text evidence="3">Belongs to the type III secretion exporter family.</text>
</comment>
<reference key="1">
    <citation type="journal article" date="1995" name="Gene">
        <title>Identification and sequences of the Treponema pallidum fliM', fliY, fliP, fliQ, fliR and flhB' genes.</title>
        <authorList>
            <person name="Hardham J.M."/>
            <person name="Frye J.G."/>
            <person name="Stamm L.V."/>
        </authorList>
    </citation>
    <scope>NUCLEOTIDE SEQUENCE [GENOMIC DNA]</scope>
    <source>
        <strain>Nichols</strain>
    </source>
</reference>
<reference key="2">
    <citation type="journal article" date="1998" name="Science">
        <title>Complete genome sequence of Treponema pallidum, the syphilis spirochete.</title>
        <authorList>
            <person name="Fraser C.M."/>
            <person name="Norris S.J."/>
            <person name="Weinstock G.M."/>
            <person name="White O."/>
            <person name="Sutton G.G."/>
            <person name="Dodson R.J."/>
            <person name="Gwinn M.L."/>
            <person name="Hickey E.K."/>
            <person name="Clayton R.A."/>
            <person name="Ketchum K.A."/>
            <person name="Sodergren E."/>
            <person name="Hardham J.M."/>
            <person name="McLeod M.P."/>
            <person name="Salzberg S.L."/>
            <person name="Peterson J.D."/>
            <person name="Khalak H.G."/>
            <person name="Richardson D.L."/>
            <person name="Howell J.K."/>
            <person name="Chidambaram M."/>
            <person name="Utterback T.R."/>
            <person name="McDonald L.A."/>
            <person name="Artiach P."/>
            <person name="Bowman C."/>
            <person name="Cotton M.D."/>
            <person name="Fujii C."/>
            <person name="Garland S.A."/>
            <person name="Hatch B."/>
            <person name="Horst K."/>
            <person name="Roberts K.M."/>
            <person name="Sandusky M."/>
            <person name="Weidman J.F."/>
            <person name="Smith H.O."/>
            <person name="Venter J.C."/>
        </authorList>
    </citation>
    <scope>NUCLEOTIDE SEQUENCE [LARGE SCALE GENOMIC DNA]</scope>
    <source>
        <strain>Nichols</strain>
    </source>
</reference>